<proteinExistence type="inferred from homology"/>
<name>IF2_SHESR</name>
<keyword id="KW-0963">Cytoplasm</keyword>
<keyword id="KW-0342">GTP-binding</keyword>
<keyword id="KW-0396">Initiation factor</keyword>
<keyword id="KW-0547">Nucleotide-binding</keyword>
<keyword id="KW-0648">Protein biosynthesis</keyword>
<protein>
    <recommendedName>
        <fullName evidence="2">Translation initiation factor IF-2</fullName>
    </recommendedName>
</protein>
<dbReference type="EMBL" id="CP000444">
    <property type="protein sequence ID" value="ABI42090.1"/>
    <property type="molecule type" value="Genomic_DNA"/>
</dbReference>
<dbReference type="SMR" id="Q0HXR5"/>
<dbReference type="KEGG" id="shm:Shewmr7_1091"/>
<dbReference type="HOGENOM" id="CLU_006301_6_3_6"/>
<dbReference type="GO" id="GO:0005829">
    <property type="term" value="C:cytosol"/>
    <property type="evidence" value="ECO:0007669"/>
    <property type="project" value="TreeGrafter"/>
</dbReference>
<dbReference type="GO" id="GO:0005525">
    <property type="term" value="F:GTP binding"/>
    <property type="evidence" value="ECO:0007669"/>
    <property type="project" value="UniProtKB-KW"/>
</dbReference>
<dbReference type="GO" id="GO:0003924">
    <property type="term" value="F:GTPase activity"/>
    <property type="evidence" value="ECO:0007669"/>
    <property type="project" value="UniProtKB-UniRule"/>
</dbReference>
<dbReference type="GO" id="GO:0097216">
    <property type="term" value="F:guanosine tetraphosphate binding"/>
    <property type="evidence" value="ECO:0007669"/>
    <property type="project" value="UniProtKB-ARBA"/>
</dbReference>
<dbReference type="GO" id="GO:0003743">
    <property type="term" value="F:translation initiation factor activity"/>
    <property type="evidence" value="ECO:0007669"/>
    <property type="project" value="UniProtKB-UniRule"/>
</dbReference>
<dbReference type="CDD" id="cd01887">
    <property type="entry name" value="IF2_eIF5B"/>
    <property type="match status" value="1"/>
</dbReference>
<dbReference type="CDD" id="cd03702">
    <property type="entry name" value="IF2_mtIF2_II"/>
    <property type="match status" value="1"/>
</dbReference>
<dbReference type="CDD" id="cd03692">
    <property type="entry name" value="mtIF2_IVc"/>
    <property type="match status" value="1"/>
</dbReference>
<dbReference type="FunFam" id="2.40.30.10:FF:000007">
    <property type="entry name" value="Translation initiation factor IF-2"/>
    <property type="match status" value="1"/>
</dbReference>
<dbReference type="FunFam" id="2.40.30.10:FF:000008">
    <property type="entry name" value="Translation initiation factor IF-2"/>
    <property type="match status" value="1"/>
</dbReference>
<dbReference type="FunFam" id="3.40.50.10050:FF:000001">
    <property type="entry name" value="Translation initiation factor IF-2"/>
    <property type="match status" value="1"/>
</dbReference>
<dbReference type="FunFam" id="3.40.50.300:FF:000019">
    <property type="entry name" value="Translation initiation factor IF-2"/>
    <property type="match status" value="1"/>
</dbReference>
<dbReference type="Gene3D" id="3.40.50.300">
    <property type="entry name" value="P-loop containing nucleotide triphosphate hydrolases"/>
    <property type="match status" value="1"/>
</dbReference>
<dbReference type="Gene3D" id="3.30.56.50">
    <property type="entry name" value="Putative DNA-binding domain, N-terminal subdomain of bacterial translation initiation factor IF2"/>
    <property type="match status" value="1"/>
</dbReference>
<dbReference type="Gene3D" id="2.40.30.10">
    <property type="entry name" value="Translation factors"/>
    <property type="match status" value="2"/>
</dbReference>
<dbReference type="Gene3D" id="3.40.50.10050">
    <property type="entry name" value="Translation initiation factor IF- 2, domain 3"/>
    <property type="match status" value="1"/>
</dbReference>
<dbReference type="HAMAP" id="MF_00100_B">
    <property type="entry name" value="IF_2_B"/>
    <property type="match status" value="1"/>
</dbReference>
<dbReference type="InterPro" id="IPR009061">
    <property type="entry name" value="DNA-bd_dom_put_sf"/>
</dbReference>
<dbReference type="InterPro" id="IPR053905">
    <property type="entry name" value="EF-G-like_DII"/>
</dbReference>
<dbReference type="InterPro" id="IPR004161">
    <property type="entry name" value="EFTu-like_2"/>
</dbReference>
<dbReference type="InterPro" id="IPR013575">
    <property type="entry name" value="IF2_assoc_dom_bac"/>
</dbReference>
<dbReference type="InterPro" id="IPR044145">
    <property type="entry name" value="IF2_II"/>
</dbReference>
<dbReference type="InterPro" id="IPR006847">
    <property type="entry name" value="IF2_N"/>
</dbReference>
<dbReference type="InterPro" id="IPR027417">
    <property type="entry name" value="P-loop_NTPase"/>
</dbReference>
<dbReference type="InterPro" id="IPR005225">
    <property type="entry name" value="Small_GTP-bd"/>
</dbReference>
<dbReference type="InterPro" id="IPR000795">
    <property type="entry name" value="T_Tr_GTP-bd_dom"/>
</dbReference>
<dbReference type="InterPro" id="IPR000178">
    <property type="entry name" value="TF_IF2_bacterial-like"/>
</dbReference>
<dbReference type="InterPro" id="IPR015760">
    <property type="entry name" value="TIF_IF2"/>
</dbReference>
<dbReference type="InterPro" id="IPR023115">
    <property type="entry name" value="TIF_IF2_dom3"/>
</dbReference>
<dbReference type="InterPro" id="IPR036925">
    <property type="entry name" value="TIF_IF2_dom3_sf"/>
</dbReference>
<dbReference type="InterPro" id="IPR009000">
    <property type="entry name" value="Transl_B-barrel_sf"/>
</dbReference>
<dbReference type="NCBIfam" id="TIGR00487">
    <property type="entry name" value="IF-2"/>
    <property type="match status" value="1"/>
</dbReference>
<dbReference type="NCBIfam" id="TIGR00231">
    <property type="entry name" value="small_GTP"/>
    <property type="match status" value="1"/>
</dbReference>
<dbReference type="PANTHER" id="PTHR43381:SF5">
    <property type="entry name" value="TR-TYPE G DOMAIN-CONTAINING PROTEIN"/>
    <property type="match status" value="1"/>
</dbReference>
<dbReference type="PANTHER" id="PTHR43381">
    <property type="entry name" value="TRANSLATION INITIATION FACTOR IF-2-RELATED"/>
    <property type="match status" value="1"/>
</dbReference>
<dbReference type="Pfam" id="PF22042">
    <property type="entry name" value="EF-G_D2"/>
    <property type="match status" value="1"/>
</dbReference>
<dbReference type="Pfam" id="PF00009">
    <property type="entry name" value="GTP_EFTU"/>
    <property type="match status" value="1"/>
</dbReference>
<dbReference type="Pfam" id="PF03144">
    <property type="entry name" value="GTP_EFTU_D2"/>
    <property type="match status" value="1"/>
</dbReference>
<dbReference type="Pfam" id="PF11987">
    <property type="entry name" value="IF-2"/>
    <property type="match status" value="1"/>
</dbReference>
<dbReference type="Pfam" id="PF08364">
    <property type="entry name" value="IF2_assoc"/>
    <property type="match status" value="1"/>
</dbReference>
<dbReference type="Pfam" id="PF04760">
    <property type="entry name" value="IF2_N"/>
    <property type="match status" value="2"/>
</dbReference>
<dbReference type="SUPFAM" id="SSF52156">
    <property type="entry name" value="Initiation factor IF2/eIF5b, domain 3"/>
    <property type="match status" value="1"/>
</dbReference>
<dbReference type="SUPFAM" id="SSF52540">
    <property type="entry name" value="P-loop containing nucleoside triphosphate hydrolases"/>
    <property type="match status" value="1"/>
</dbReference>
<dbReference type="SUPFAM" id="SSF46955">
    <property type="entry name" value="Putative DNA-binding domain"/>
    <property type="match status" value="1"/>
</dbReference>
<dbReference type="SUPFAM" id="SSF50447">
    <property type="entry name" value="Translation proteins"/>
    <property type="match status" value="2"/>
</dbReference>
<dbReference type="PROSITE" id="PS51722">
    <property type="entry name" value="G_TR_2"/>
    <property type="match status" value="1"/>
</dbReference>
<dbReference type="PROSITE" id="PS01176">
    <property type="entry name" value="IF2"/>
    <property type="match status" value="1"/>
</dbReference>
<sequence>MADTTVEKLATEVGKSVERLIEQFSQAGIKKGHTDNVSEAEKQQLLDYLKKQHGGDNAPTKMTLQRKTVSTLSVAGNGGQSKDVKVEVRKTRTFVKRDANDAVLKAEEEAKAKAEAEAKAKAEAEAKAKAEAEVKAKAEAEAKAKAEAEAKAKAKAAAEVKVIKELSPEAEAARVEAERLKAVQAEATKRKQDEEAAKAAEKARLLAEENSKRWAEEERQRLEAERYSDHHITTSKVARAAEDSSDMDEEKRGRRARNKNTAKSKRGGKDARDGREKHMRNRSTAPESMAHGFNKPVAAVNRDVRIGETVTVAELAHLMAVKATEIIKQMMKMGSMVTINQVLDQETAQLVAEEMGHKVVLIRENELEQQVLSERDEEGVVKLEPRAPVVTIMGHVDHGKTSLLDYIRRAKVAAGEAGGITQHIGAYHVETDNGMITFLDTPGHAAFTAMRARGAKATDIVVLVVAADDGVMPQTIEAIQHAKAGNVPLIVAVNKMDKPEADIDRVKSELAQHGVMSEDWGGDNMFAFVSAKTGAGVDDLLEGILLQAEVLELKAVRDGMAAGVVIESQLDKGRGPVATILVQEGTLRQGDIVLCGLEYGKIRAMKDENGRSITEAGPSIPVEILGLSGVPSAGDEATVVRDERKAREVALYRQGKFRDVKLARQQKSKLENMFANMTEGEVKELNIVLKADVQGSLEAITDSLMGLSTDEVKVNIIARGVGALTETDATLAAASNAIMVGFNVRADAQARKTIESESVDLRYYSVIYNLIDEVKAAMTGMLSPEFKQQIIGLAEVRDVFKSPKLGAIAGCMVTEGTIKRSAPIRVLRDNVVIFEGELESLRRFKDDVNEVRNGMECGIGVKNYNDVRVGDQIEVFETVEVARTL</sequence>
<gene>
    <name evidence="2" type="primary">infB</name>
    <name type="ordered locus">Shewmr7_1091</name>
</gene>
<accession>Q0HXR5</accession>
<feature type="chain" id="PRO_1000008336" description="Translation initiation factor IF-2">
    <location>
        <begin position="1"/>
        <end position="885"/>
    </location>
</feature>
<feature type="domain" description="tr-type G">
    <location>
        <begin position="385"/>
        <end position="554"/>
    </location>
</feature>
<feature type="region of interest" description="Disordered" evidence="3">
    <location>
        <begin position="135"/>
        <end position="159"/>
    </location>
</feature>
<feature type="region of interest" description="Disordered" evidence="3">
    <location>
        <begin position="184"/>
        <end position="289"/>
    </location>
</feature>
<feature type="region of interest" description="G1" evidence="1">
    <location>
        <begin position="394"/>
        <end position="401"/>
    </location>
</feature>
<feature type="region of interest" description="G2" evidence="1">
    <location>
        <begin position="419"/>
        <end position="423"/>
    </location>
</feature>
<feature type="region of interest" description="G3" evidence="1">
    <location>
        <begin position="440"/>
        <end position="443"/>
    </location>
</feature>
<feature type="region of interest" description="G4" evidence="1">
    <location>
        <begin position="494"/>
        <end position="497"/>
    </location>
</feature>
<feature type="region of interest" description="G5" evidence="1">
    <location>
        <begin position="530"/>
        <end position="532"/>
    </location>
</feature>
<feature type="compositionally biased region" description="Basic and acidic residues" evidence="3">
    <location>
        <begin position="184"/>
        <end position="232"/>
    </location>
</feature>
<feature type="compositionally biased region" description="Basic residues" evidence="3">
    <location>
        <begin position="253"/>
        <end position="266"/>
    </location>
</feature>
<feature type="compositionally biased region" description="Basic and acidic residues" evidence="3">
    <location>
        <begin position="267"/>
        <end position="276"/>
    </location>
</feature>
<feature type="binding site" evidence="2">
    <location>
        <begin position="394"/>
        <end position="401"/>
    </location>
    <ligand>
        <name>GTP</name>
        <dbReference type="ChEBI" id="CHEBI:37565"/>
    </ligand>
</feature>
<feature type="binding site" evidence="2">
    <location>
        <begin position="440"/>
        <end position="444"/>
    </location>
    <ligand>
        <name>GTP</name>
        <dbReference type="ChEBI" id="CHEBI:37565"/>
    </ligand>
</feature>
<feature type="binding site" evidence="2">
    <location>
        <begin position="494"/>
        <end position="497"/>
    </location>
    <ligand>
        <name>GTP</name>
        <dbReference type="ChEBI" id="CHEBI:37565"/>
    </ligand>
</feature>
<reference key="1">
    <citation type="submission" date="2006-08" db="EMBL/GenBank/DDBJ databases">
        <title>Complete sequence of chromosome 1 of Shewanella sp. MR-7.</title>
        <authorList>
            <person name="Copeland A."/>
            <person name="Lucas S."/>
            <person name="Lapidus A."/>
            <person name="Barry K."/>
            <person name="Detter J.C."/>
            <person name="Glavina del Rio T."/>
            <person name="Hammon N."/>
            <person name="Israni S."/>
            <person name="Dalin E."/>
            <person name="Tice H."/>
            <person name="Pitluck S."/>
            <person name="Kiss H."/>
            <person name="Brettin T."/>
            <person name="Bruce D."/>
            <person name="Han C."/>
            <person name="Tapia R."/>
            <person name="Gilna P."/>
            <person name="Schmutz J."/>
            <person name="Larimer F."/>
            <person name="Land M."/>
            <person name="Hauser L."/>
            <person name="Kyrpides N."/>
            <person name="Mikhailova N."/>
            <person name="Nealson K."/>
            <person name="Konstantinidis K."/>
            <person name="Klappenbach J."/>
            <person name="Tiedje J."/>
            <person name="Richardson P."/>
        </authorList>
    </citation>
    <scope>NUCLEOTIDE SEQUENCE [LARGE SCALE GENOMIC DNA]</scope>
    <source>
        <strain>MR-7</strain>
    </source>
</reference>
<comment type="function">
    <text evidence="2">One of the essential components for the initiation of protein synthesis. Protects formylmethionyl-tRNA from spontaneous hydrolysis and promotes its binding to the 30S ribosomal subunits. Also involved in the hydrolysis of GTP during the formation of the 70S ribosomal complex.</text>
</comment>
<comment type="subcellular location">
    <subcellularLocation>
        <location evidence="2">Cytoplasm</location>
    </subcellularLocation>
</comment>
<comment type="similarity">
    <text evidence="2">Belongs to the TRAFAC class translation factor GTPase superfamily. Classic translation factor GTPase family. IF-2 subfamily.</text>
</comment>
<organism>
    <name type="scientific">Shewanella sp. (strain MR-7)</name>
    <dbReference type="NCBI Taxonomy" id="60481"/>
    <lineage>
        <taxon>Bacteria</taxon>
        <taxon>Pseudomonadati</taxon>
        <taxon>Pseudomonadota</taxon>
        <taxon>Gammaproteobacteria</taxon>
        <taxon>Alteromonadales</taxon>
        <taxon>Shewanellaceae</taxon>
        <taxon>Shewanella</taxon>
    </lineage>
</organism>
<evidence type="ECO:0000250" key="1"/>
<evidence type="ECO:0000255" key="2">
    <source>
        <dbReference type="HAMAP-Rule" id="MF_00100"/>
    </source>
</evidence>
<evidence type="ECO:0000256" key="3">
    <source>
        <dbReference type="SAM" id="MobiDB-lite"/>
    </source>
</evidence>